<evidence type="ECO:0000250" key="1"/>
<evidence type="ECO:0000305" key="2"/>
<comment type="function">
    <text evidence="1">Involved in xanthan production.</text>
</comment>
<comment type="catalytic activity">
    <reaction>
        <text>D-mannose 6-phosphate = D-fructose 6-phosphate</text>
        <dbReference type="Rhea" id="RHEA:12356"/>
        <dbReference type="ChEBI" id="CHEBI:58735"/>
        <dbReference type="ChEBI" id="CHEBI:61527"/>
        <dbReference type="EC" id="5.3.1.8"/>
    </reaction>
</comment>
<comment type="catalytic activity">
    <reaction>
        <text>alpha-D-mannose 1-phosphate + GTP + H(+) = GDP-alpha-D-mannose + diphosphate</text>
        <dbReference type="Rhea" id="RHEA:15229"/>
        <dbReference type="ChEBI" id="CHEBI:15378"/>
        <dbReference type="ChEBI" id="CHEBI:33019"/>
        <dbReference type="ChEBI" id="CHEBI:37565"/>
        <dbReference type="ChEBI" id="CHEBI:57527"/>
        <dbReference type="ChEBI" id="CHEBI:58409"/>
        <dbReference type="EC" id="2.7.7.13"/>
    </reaction>
</comment>
<comment type="pathway">
    <text>Nucleotide-sugar biosynthesis; GDP-alpha-D-mannose biosynthesis; GDP-alpha-D-mannose from alpha-D-mannose 1-phosphate (GTP route): step 1/1.</text>
</comment>
<comment type="pathway">
    <text>Nucleotide-sugar biosynthesis; GDP-alpha-D-mannose biosynthesis; alpha-D-mannose 1-phosphate from D-fructose 6-phosphate: step 1/2.</text>
</comment>
<comment type="similarity">
    <text evidence="2">Belongs to the mannose-6-phosphate isomerase type 2 family.</text>
</comment>
<reference key="1">
    <citation type="journal article" date="2002" name="Nature">
        <title>Comparison of the genomes of two Xanthomonas pathogens with differing host specificities.</title>
        <authorList>
            <person name="da Silva A.C.R."/>
            <person name="Ferro J.A."/>
            <person name="Reinach F.C."/>
            <person name="Farah C.S."/>
            <person name="Furlan L.R."/>
            <person name="Quaggio R.B."/>
            <person name="Monteiro-Vitorello C.B."/>
            <person name="Van Sluys M.A."/>
            <person name="Almeida N.F. Jr."/>
            <person name="Alves L.M.C."/>
            <person name="do Amaral A.M."/>
            <person name="Bertolini M.C."/>
            <person name="Camargo L.E.A."/>
            <person name="Camarotte G."/>
            <person name="Cannavan F."/>
            <person name="Cardozo J."/>
            <person name="Chambergo F."/>
            <person name="Ciapina L.P."/>
            <person name="Cicarelli R.M.B."/>
            <person name="Coutinho L.L."/>
            <person name="Cursino-Santos J.R."/>
            <person name="El-Dorry H."/>
            <person name="Faria J.B."/>
            <person name="Ferreira A.J.S."/>
            <person name="Ferreira R.C.C."/>
            <person name="Ferro M.I.T."/>
            <person name="Formighieri E.F."/>
            <person name="Franco M.C."/>
            <person name="Greggio C.C."/>
            <person name="Gruber A."/>
            <person name="Katsuyama A.M."/>
            <person name="Kishi L.T."/>
            <person name="Leite R.P."/>
            <person name="Lemos E.G.M."/>
            <person name="Lemos M.V.F."/>
            <person name="Locali E.C."/>
            <person name="Machado M.A."/>
            <person name="Madeira A.M.B.N."/>
            <person name="Martinez-Rossi N.M."/>
            <person name="Martins E.C."/>
            <person name="Meidanis J."/>
            <person name="Menck C.F.M."/>
            <person name="Miyaki C.Y."/>
            <person name="Moon D.H."/>
            <person name="Moreira L.M."/>
            <person name="Novo M.T.M."/>
            <person name="Okura V.K."/>
            <person name="Oliveira M.C."/>
            <person name="Oliveira V.R."/>
            <person name="Pereira H.A."/>
            <person name="Rossi A."/>
            <person name="Sena J.A.D."/>
            <person name="Silva C."/>
            <person name="de Souza R.F."/>
            <person name="Spinola L.A.F."/>
            <person name="Takita M.A."/>
            <person name="Tamura R.E."/>
            <person name="Teixeira E.C."/>
            <person name="Tezza R.I.D."/>
            <person name="Trindade dos Santos M."/>
            <person name="Truffi D."/>
            <person name="Tsai S.M."/>
            <person name="White F.F."/>
            <person name="Setubal J.C."/>
            <person name="Kitajima J.P."/>
        </authorList>
    </citation>
    <scope>NUCLEOTIDE SEQUENCE [LARGE SCALE GENOMIC DNA]</scope>
    <source>
        <strain>ATCC 33913 / DSM 3586 / NCPPB 528 / LMG 568 / P 25</strain>
    </source>
</reference>
<sequence>MSDVLPIILSGGSGTRLWPLSRESYPKQFLPLVGEHSMLQATWLRSAPVAAHAPIVVANEEHRFMAAEQLQQLGVKPSAILLEPKGRNTAPAIAVAALEATRNGGDPLLLVLPSDHVIRDEAAFQAAVTVAAAAAEQGKLVTFGIKPTAPETGYGYIKAGVGTGATAVERFVEKPDLATAQGYLASGEYYWNSGMFLFRASRYLEELRKFQPAIADACQKAWEGGKRDADFTRLDKDAFASSPSDSIDYAVMEKTADAVVVPLDAGWNDVGSWSSLLDVSEQDGQGNAHHGDVIQLDCKNTYAYGSRLIAMVGLENVVVVETDDAVLVGHRDRIQEVKEVVSQIKSAGRSEATWHRKVYRPWGAYDSIDMGQRFQVKRITVKPGATLSLQMHHHRAEHWIVVSGTAEVTRGEEVLLLTENQSTYIPLGVTHRLKNPGKLPLELIEVQSGSYLGEDDIVRFEDTYGRT</sequence>
<name>XANB_XANCP</name>
<accession>P0C7J3</accession>
<accession>P29956</accession>
<accession>Q93S98</accession>
<proteinExistence type="inferred from homology"/>
<protein>
    <recommendedName>
        <fullName>Xanthan biosynthesis protein XanB</fullName>
    </recommendedName>
    <domain>
        <recommendedName>
            <fullName>Mannose-6-phosphate isomerase</fullName>
            <ecNumber>5.3.1.8</ecNumber>
        </recommendedName>
        <alternativeName>
            <fullName>Phosphohexomutase</fullName>
        </alternativeName>
        <alternativeName>
            <fullName>Phosphomannose isomerase</fullName>
            <shortName>PMI</shortName>
        </alternativeName>
    </domain>
    <domain>
        <recommendedName>
            <fullName>Mannose-1-phosphate guanylyl transferase</fullName>
            <ecNumber>2.7.7.13</ecNumber>
        </recommendedName>
        <alternativeName>
            <fullName>GDP-mannose pyrophosphorylase</fullName>
            <shortName>GMP</shortName>
            <shortName>GMPP</shortName>
        </alternativeName>
    </domain>
</protein>
<keyword id="KW-0270">Exopolysaccharide synthesis</keyword>
<keyword id="KW-0342">GTP-binding</keyword>
<keyword id="KW-0413">Isomerase</keyword>
<keyword id="KW-0448">Lipopolysaccharide biosynthesis</keyword>
<keyword id="KW-0511">Multifunctional enzyme</keyword>
<keyword id="KW-0547">Nucleotide-binding</keyword>
<keyword id="KW-0548">Nucleotidyltransferase</keyword>
<keyword id="KW-1185">Reference proteome</keyword>
<keyword id="KW-0808">Transferase</keyword>
<feature type="chain" id="PRO_0000194252" description="Xanthan biosynthesis protein XanB">
    <location>
        <begin position="1"/>
        <end position="467"/>
    </location>
</feature>
<gene>
    <name type="primary">xanB</name>
    <name type="ordered locus">XCC0625</name>
</gene>
<dbReference type="EC" id="5.3.1.8"/>
<dbReference type="EC" id="2.7.7.13"/>
<dbReference type="EMBL" id="AE008922">
    <property type="protein sequence ID" value="AAM39941.1"/>
    <property type="molecule type" value="Genomic_DNA"/>
</dbReference>
<dbReference type="RefSeq" id="NP_636017.1">
    <property type="nucleotide sequence ID" value="NC_003902.1"/>
</dbReference>
<dbReference type="RefSeq" id="WP_011035868.1">
    <property type="nucleotide sequence ID" value="NC_003902.1"/>
</dbReference>
<dbReference type="SMR" id="P0C7J3"/>
<dbReference type="STRING" id="190485.XCC0625"/>
<dbReference type="EnsemblBacteria" id="AAM39941">
    <property type="protein sequence ID" value="AAM39941"/>
    <property type="gene ID" value="XCC0625"/>
</dbReference>
<dbReference type="KEGG" id="xcc:XCC0625"/>
<dbReference type="PATRIC" id="fig|190485.4.peg.686"/>
<dbReference type="eggNOG" id="COG0662">
    <property type="taxonomic scope" value="Bacteria"/>
</dbReference>
<dbReference type="eggNOG" id="COG0836">
    <property type="taxonomic scope" value="Bacteria"/>
</dbReference>
<dbReference type="HOGENOM" id="CLU_035527_1_0_6"/>
<dbReference type="OrthoDB" id="9806359at2"/>
<dbReference type="UniPathway" id="UPA00126">
    <property type="reaction ID" value="UER00423"/>
</dbReference>
<dbReference type="UniPathway" id="UPA00126">
    <property type="reaction ID" value="UER00930"/>
</dbReference>
<dbReference type="Proteomes" id="UP000001010">
    <property type="component" value="Chromosome"/>
</dbReference>
<dbReference type="GO" id="GO:0005525">
    <property type="term" value="F:GTP binding"/>
    <property type="evidence" value="ECO:0007669"/>
    <property type="project" value="UniProtKB-KW"/>
</dbReference>
<dbReference type="GO" id="GO:0004475">
    <property type="term" value="F:mannose-1-phosphate guanylyltransferase (GTP) activity"/>
    <property type="evidence" value="ECO:0000318"/>
    <property type="project" value="GO_Central"/>
</dbReference>
<dbReference type="GO" id="GO:0004476">
    <property type="term" value="F:mannose-6-phosphate isomerase activity"/>
    <property type="evidence" value="ECO:0007669"/>
    <property type="project" value="UniProtKB-EC"/>
</dbReference>
<dbReference type="GO" id="GO:0009298">
    <property type="term" value="P:GDP-mannose biosynthetic process"/>
    <property type="evidence" value="ECO:0000318"/>
    <property type="project" value="GO_Central"/>
</dbReference>
<dbReference type="GO" id="GO:0009103">
    <property type="term" value="P:lipopolysaccharide biosynthetic process"/>
    <property type="evidence" value="ECO:0007669"/>
    <property type="project" value="UniProtKB-KW"/>
</dbReference>
<dbReference type="CDD" id="cd02213">
    <property type="entry name" value="cupin_PMI_typeII_C"/>
    <property type="match status" value="1"/>
</dbReference>
<dbReference type="CDD" id="cd02509">
    <property type="entry name" value="GDP-M1P_Guanylyltransferase"/>
    <property type="match status" value="1"/>
</dbReference>
<dbReference type="FunFam" id="3.90.550.10:FF:000046">
    <property type="entry name" value="Mannose-1-phosphate guanylyltransferase (GDP)"/>
    <property type="match status" value="1"/>
</dbReference>
<dbReference type="FunFam" id="2.60.120.10:FF:000032">
    <property type="entry name" value="Mannose-1-phosphate guanylyltransferase/mannose-6-phosphate isomerase"/>
    <property type="match status" value="1"/>
</dbReference>
<dbReference type="Gene3D" id="2.60.120.10">
    <property type="entry name" value="Jelly Rolls"/>
    <property type="match status" value="1"/>
</dbReference>
<dbReference type="Gene3D" id="3.90.550.10">
    <property type="entry name" value="Spore Coat Polysaccharide Biosynthesis Protein SpsA, Chain A"/>
    <property type="match status" value="1"/>
</dbReference>
<dbReference type="InterPro" id="IPR049577">
    <property type="entry name" value="GMPP_N"/>
</dbReference>
<dbReference type="InterPro" id="IPR006375">
    <property type="entry name" value="Man1P_GuaTrfase/Man6P_Isoase"/>
</dbReference>
<dbReference type="InterPro" id="IPR001538">
    <property type="entry name" value="Man6P_isomerase-2_C"/>
</dbReference>
<dbReference type="InterPro" id="IPR054566">
    <property type="entry name" value="ManC/GMP-like_b-helix"/>
</dbReference>
<dbReference type="InterPro" id="IPR051161">
    <property type="entry name" value="Mannose-6P_isomerase_type2"/>
</dbReference>
<dbReference type="InterPro" id="IPR005835">
    <property type="entry name" value="NTP_transferase_dom"/>
</dbReference>
<dbReference type="InterPro" id="IPR029044">
    <property type="entry name" value="Nucleotide-diphossugar_trans"/>
</dbReference>
<dbReference type="InterPro" id="IPR014710">
    <property type="entry name" value="RmlC-like_jellyroll"/>
</dbReference>
<dbReference type="InterPro" id="IPR011051">
    <property type="entry name" value="RmlC_Cupin_sf"/>
</dbReference>
<dbReference type="NCBIfam" id="TIGR01479">
    <property type="entry name" value="GMP_PMI"/>
    <property type="match status" value="1"/>
</dbReference>
<dbReference type="PANTHER" id="PTHR46390">
    <property type="entry name" value="MANNOSE-1-PHOSPHATE GUANYLYLTRANSFERASE"/>
    <property type="match status" value="1"/>
</dbReference>
<dbReference type="PANTHER" id="PTHR46390:SF1">
    <property type="entry name" value="MANNOSE-1-PHOSPHATE GUANYLYLTRANSFERASE"/>
    <property type="match status" value="1"/>
</dbReference>
<dbReference type="Pfam" id="PF22640">
    <property type="entry name" value="ManC_GMP_beta-helix"/>
    <property type="match status" value="1"/>
</dbReference>
<dbReference type="Pfam" id="PF01050">
    <property type="entry name" value="MannoseP_isomer"/>
    <property type="match status" value="1"/>
</dbReference>
<dbReference type="Pfam" id="PF00483">
    <property type="entry name" value="NTP_transferase"/>
    <property type="match status" value="1"/>
</dbReference>
<dbReference type="SUPFAM" id="SSF53448">
    <property type="entry name" value="Nucleotide-diphospho-sugar transferases"/>
    <property type="match status" value="1"/>
</dbReference>
<dbReference type="SUPFAM" id="SSF51182">
    <property type="entry name" value="RmlC-like cupins"/>
    <property type="match status" value="1"/>
</dbReference>
<organism>
    <name type="scientific">Xanthomonas campestris pv. campestris (strain ATCC 33913 / DSM 3586 / NCPPB 528 / LMG 568 / P 25)</name>
    <dbReference type="NCBI Taxonomy" id="190485"/>
    <lineage>
        <taxon>Bacteria</taxon>
        <taxon>Pseudomonadati</taxon>
        <taxon>Pseudomonadota</taxon>
        <taxon>Gammaproteobacteria</taxon>
        <taxon>Lysobacterales</taxon>
        <taxon>Lysobacteraceae</taxon>
        <taxon>Xanthomonas</taxon>
    </lineage>
</organism>